<keyword id="KW-0378">Hydrolase</keyword>
<keyword id="KW-1185">Reference proteome</keyword>
<evidence type="ECO:0000255" key="1">
    <source>
        <dbReference type="PROSITE-ProRule" id="PRU00054"/>
    </source>
</evidence>
<evidence type="ECO:0000305" key="2"/>
<reference key="1">
    <citation type="journal article" date="2005" name="Nature">
        <title>The genome of the social amoeba Dictyostelium discoideum.</title>
        <authorList>
            <person name="Eichinger L."/>
            <person name="Pachebat J.A."/>
            <person name="Gloeckner G."/>
            <person name="Rajandream M.A."/>
            <person name="Sucgang R."/>
            <person name="Berriman M."/>
            <person name="Song J."/>
            <person name="Olsen R."/>
            <person name="Szafranski K."/>
            <person name="Xu Q."/>
            <person name="Tunggal B."/>
            <person name="Kummerfeld S."/>
            <person name="Madera M."/>
            <person name="Konfortov B.A."/>
            <person name="Rivero F."/>
            <person name="Bankier A.T."/>
            <person name="Lehmann R."/>
            <person name="Hamlin N."/>
            <person name="Davies R."/>
            <person name="Gaudet P."/>
            <person name="Fey P."/>
            <person name="Pilcher K."/>
            <person name="Chen G."/>
            <person name="Saunders D."/>
            <person name="Sodergren E.J."/>
            <person name="Davis P."/>
            <person name="Kerhornou A."/>
            <person name="Nie X."/>
            <person name="Hall N."/>
            <person name="Anjard C."/>
            <person name="Hemphill L."/>
            <person name="Bason N."/>
            <person name="Farbrother P."/>
            <person name="Desany B."/>
            <person name="Just E."/>
            <person name="Morio T."/>
            <person name="Rost R."/>
            <person name="Churcher C.M."/>
            <person name="Cooper J."/>
            <person name="Haydock S."/>
            <person name="van Driessche N."/>
            <person name="Cronin A."/>
            <person name="Goodhead I."/>
            <person name="Muzny D.M."/>
            <person name="Mourier T."/>
            <person name="Pain A."/>
            <person name="Lu M."/>
            <person name="Harper D."/>
            <person name="Lindsay R."/>
            <person name="Hauser H."/>
            <person name="James K.D."/>
            <person name="Quiles M."/>
            <person name="Madan Babu M."/>
            <person name="Saito T."/>
            <person name="Buchrieser C."/>
            <person name="Wardroper A."/>
            <person name="Felder M."/>
            <person name="Thangavelu M."/>
            <person name="Johnson D."/>
            <person name="Knights A."/>
            <person name="Loulseged H."/>
            <person name="Mungall K.L."/>
            <person name="Oliver K."/>
            <person name="Price C."/>
            <person name="Quail M.A."/>
            <person name="Urushihara H."/>
            <person name="Hernandez J."/>
            <person name="Rabbinowitsch E."/>
            <person name="Steffen D."/>
            <person name="Sanders M."/>
            <person name="Ma J."/>
            <person name="Kohara Y."/>
            <person name="Sharp S."/>
            <person name="Simmonds M.N."/>
            <person name="Spiegler S."/>
            <person name="Tivey A."/>
            <person name="Sugano S."/>
            <person name="White B."/>
            <person name="Walker D."/>
            <person name="Woodward J.R."/>
            <person name="Winckler T."/>
            <person name="Tanaka Y."/>
            <person name="Shaulsky G."/>
            <person name="Schleicher M."/>
            <person name="Weinstock G.M."/>
            <person name="Rosenthal A."/>
            <person name="Cox E.C."/>
            <person name="Chisholm R.L."/>
            <person name="Gibbs R.A."/>
            <person name="Loomis W.F."/>
            <person name="Platzer M."/>
            <person name="Kay R.R."/>
            <person name="Williams J.G."/>
            <person name="Dear P.H."/>
            <person name="Noegel A.A."/>
            <person name="Barrell B.G."/>
            <person name="Kuspa A."/>
        </authorList>
    </citation>
    <scope>NUCLEOTIDE SEQUENCE [LARGE SCALE GENOMIC DNA]</scope>
    <source>
        <strain>AX4</strain>
    </source>
</reference>
<accession>Q54JM9</accession>
<proteinExistence type="inferred from homology"/>
<comment type="similarity">
    <text evidence="2">Belongs to the carbon-nitrogen hydrolase superfamily. NIT1/NIT2 family.</text>
</comment>
<organism>
    <name type="scientific">Dictyostelium discoideum</name>
    <name type="common">Social amoeba</name>
    <dbReference type="NCBI Taxonomy" id="44689"/>
    <lineage>
        <taxon>Eukaryota</taxon>
        <taxon>Amoebozoa</taxon>
        <taxon>Evosea</taxon>
        <taxon>Eumycetozoa</taxon>
        <taxon>Dictyostelia</taxon>
        <taxon>Dictyosteliales</taxon>
        <taxon>Dictyosteliaceae</taxon>
        <taxon>Dictyostelium</taxon>
    </lineage>
</organism>
<name>NIT2_DICDI</name>
<gene>
    <name type="primary">nit2</name>
    <name type="ORF">DDB_G0287939</name>
</gene>
<sequence>MYRGLINSFKNTSKFSTSLFNNNNNCSTTTKSFTHISQQLRKVHLMADKEKVFKFAGIQLLCGDNKEENVQNAIKHIDEAAKNGAKLISLPECFNSPYSTSTFEKYSETEDGETVKKLSEAAKRNQIFLVGGSIPEIDKATGKIYNTCFIFNDKGEVVKKHRKIHLFDIDVPNKIRFKESETLTPGDSFSVVDIGYCKIGVAICYDIRFPELAMLYSKMGAKFLIYPGAFNMVTGPAHWELLQRGRAVDNQVFVAAISPARNPSSTYQAWGHSTIVNSWGTILATTDEHQSIIYSDIDLNTLNETRSSIPIYSQKRDDLYKLDSIKKQ</sequence>
<feature type="chain" id="PRO_0000332973" description="Nitrilase homolog 2">
    <location>
        <begin position="1"/>
        <end position="328"/>
    </location>
</feature>
<feature type="domain" description="CN hydrolase" evidence="1">
    <location>
        <begin position="53"/>
        <end position="299"/>
    </location>
</feature>
<feature type="active site" description="Proton acceptor" evidence="1">
    <location>
        <position position="92"/>
    </location>
</feature>
<feature type="active site" description="Proton donor" evidence="1">
    <location>
        <position position="163"/>
    </location>
</feature>
<feature type="active site" description="Nucleophile" evidence="1">
    <location>
        <position position="204"/>
    </location>
</feature>
<protein>
    <recommendedName>
        <fullName>Nitrilase homolog 2</fullName>
        <ecNumber>3.5.-.-</ecNumber>
    </recommendedName>
</protein>
<dbReference type="EC" id="3.5.-.-"/>
<dbReference type="EMBL" id="AAFI02000105">
    <property type="protein sequence ID" value="EAL63476.1"/>
    <property type="molecule type" value="Genomic_DNA"/>
</dbReference>
<dbReference type="RefSeq" id="XP_636983.1">
    <property type="nucleotide sequence ID" value="XM_631891.1"/>
</dbReference>
<dbReference type="SMR" id="Q54JM9"/>
<dbReference type="FunCoup" id="Q54JM9">
    <property type="interactions" value="257"/>
</dbReference>
<dbReference type="STRING" id="44689.Q54JM9"/>
<dbReference type="PaxDb" id="44689-DDB0302493"/>
<dbReference type="EnsemblProtists" id="EAL63476">
    <property type="protein sequence ID" value="EAL63476"/>
    <property type="gene ID" value="DDB_G0287939"/>
</dbReference>
<dbReference type="GeneID" id="8626377"/>
<dbReference type="KEGG" id="ddi:DDB_G0287939"/>
<dbReference type="dictyBase" id="DDB_G0287939">
    <property type="gene designation" value="nit2"/>
</dbReference>
<dbReference type="VEuPathDB" id="AmoebaDB:DDB_G0287939"/>
<dbReference type="eggNOG" id="KOG0806">
    <property type="taxonomic scope" value="Eukaryota"/>
</dbReference>
<dbReference type="HOGENOM" id="CLU_030130_1_0_1"/>
<dbReference type="InParanoid" id="Q54JM9"/>
<dbReference type="OMA" id="MQSKPYA"/>
<dbReference type="PhylomeDB" id="Q54JM9"/>
<dbReference type="Reactome" id="R-DDI-6798695">
    <property type="pathway name" value="Neutrophil degranulation"/>
</dbReference>
<dbReference type="PRO" id="PR:Q54JM9"/>
<dbReference type="Proteomes" id="UP000002195">
    <property type="component" value="Chromosome 5"/>
</dbReference>
<dbReference type="GO" id="GO:0050152">
    <property type="term" value="F:omega-amidase activity"/>
    <property type="evidence" value="ECO:0000318"/>
    <property type="project" value="GO_Central"/>
</dbReference>
<dbReference type="GO" id="GO:0006528">
    <property type="term" value="P:asparagine metabolic process"/>
    <property type="evidence" value="ECO:0000318"/>
    <property type="project" value="GO_Central"/>
</dbReference>
<dbReference type="GO" id="GO:0006541">
    <property type="term" value="P:glutamine metabolic process"/>
    <property type="evidence" value="ECO:0000318"/>
    <property type="project" value="GO_Central"/>
</dbReference>
<dbReference type="GO" id="GO:0006107">
    <property type="term" value="P:oxaloacetate metabolic process"/>
    <property type="evidence" value="ECO:0000318"/>
    <property type="project" value="GO_Central"/>
</dbReference>
<dbReference type="CDD" id="cd07572">
    <property type="entry name" value="nit"/>
    <property type="match status" value="1"/>
</dbReference>
<dbReference type="FunFam" id="3.60.110.10:FF:000002">
    <property type="entry name" value="Nitrilase family member 2"/>
    <property type="match status" value="1"/>
</dbReference>
<dbReference type="Gene3D" id="3.60.110.10">
    <property type="entry name" value="Carbon-nitrogen hydrolase"/>
    <property type="match status" value="1"/>
</dbReference>
<dbReference type="InterPro" id="IPR003010">
    <property type="entry name" value="C-N_Hydrolase"/>
</dbReference>
<dbReference type="InterPro" id="IPR036526">
    <property type="entry name" value="C-N_Hydrolase_sf"/>
</dbReference>
<dbReference type="InterPro" id="IPR045254">
    <property type="entry name" value="Nit1/2_C-N_Hydrolase"/>
</dbReference>
<dbReference type="InterPro" id="IPR001110">
    <property type="entry name" value="UPF0012_CS"/>
</dbReference>
<dbReference type="PANTHER" id="PTHR23088">
    <property type="entry name" value="NITRILASE-RELATED"/>
    <property type="match status" value="1"/>
</dbReference>
<dbReference type="PANTHER" id="PTHR23088:SF30">
    <property type="entry name" value="OMEGA-AMIDASE NIT2"/>
    <property type="match status" value="1"/>
</dbReference>
<dbReference type="Pfam" id="PF00795">
    <property type="entry name" value="CN_hydrolase"/>
    <property type="match status" value="1"/>
</dbReference>
<dbReference type="SUPFAM" id="SSF56317">
    <property type="entry name" value="Carbon-nitrogen hydrolase"/>
    <property type="match status" value="1"/>
</dbReference>
<dbReference type="PROSITE" id="PS50263">
    <property type="entry name" value="CN_HYDROLASE"/>
    <property type="match status" value="1"/>
</dbReference>
<dbReference type="PROSITE" id="PS01227">
    <property type="entry name" value="UPF0012"/>
    <property type="match status" value="1"/>
</dbReference>